<organism>
    <name type="scientific">Drosophila ananassae</name>
    <name type="common">Fruit fly</name>
    <dbReference type="NCBI Taxonomy" id="7217"/>
    <lineage>
        <taxon>Eukaryota</taxon>
        <taxon>Metazoa</taxon>
        <taxon>Ecdysozoa</taxon>
        <taxon>Arthropoda</taxon>
        <taxon>Hexapoda</taxon>
        <taxon>Insecta</taxon>
        <taxon>Pterygota</taxon>
        <taxon>Neoptera</taxon>
        <taxon>Endopterygota</taxon>
        <taxon>Diptera</taxon>
        <taxon>Brachycera</taxon>
        <taxon>Muscomorpha</taxon>
        <taxon>Ephydroidea</taxon>
        <taxon>Drosophilidae</taxon>
        <taxon>Drosophila</taxon>
        <taxon>Sophophora</taxon>
    </lineage>
</organism>
<proteinExistence type="inferred from homology"/>
<protein>
    <recommendedName>
        <fullName>Probable ATP-dependent RNA helicase spindle-E</fullName>
        <ecNumber>3.6.4.13</ecNumber>
    </recommendedName>
    <alternativeName>
        <fullName>Homeless</fullName>
    </alternativeName>
</protein>
<gene>
    <name type="primary">spn-E</name>
    <name type="synonym">hls</name>
    <name type="ORF">GF18547</name>
</gene>
<dbReference type="EC" id="3.6.4.13"/>
<dbReference type="EMBL" id="CH902617">
    <property type="protein sequence ID" value="EDV43544.1"/>
    <property type="molecule type" value="Genomic_DNA"/>
</dbReference>
<dbReference type="SMR" id="B3M383"/>
<dbReference type="FunCoup" id="B3M383">
    <property type="interactions" value="171"/>
</dbReference>
<dbReference type="STRING" id="7217.B3M383"/>
<dbReference type="EnsemblMetazoa" id="FBtr0123247">
    <property type="protein sequence ID" value="FBpp0121739"/>
    <property type="gene ID" value="FBgn0095565"/>
</dbReference>
<dbReference type="EnsemblMetazoa" id="XM_001954947.4">
    <property type="protein sequence ID" value="XP_001954983.2"/>
    <property type="gene ID" value="LOC6501320"/>
</dbReference>
<dbReference type="GeneID" id="6501320"/>
<dbReference type="KEGG" id="dan:6501320"/>
<dbReference type="eggNOG" id="KOG0920">
    <property type="taxonomic scope" value="Eukaryota"/>
</dbReference>
<dbReference type="HOGENOM" id="CLU_002601_1_0_1"/>
<dbReference type="InParanoid" id="B3M383"/>
<dbReference type="OMA" id="QRSAYCS"/>
<dbReference type="OrthoDB" id="66977at2759"/>
<dbReference type="PhylomeDB" id="B3M383"/>
<dbReference type="Proteomes" id="UP000007801">
    <property type="component" value="Unassembled WGS sequence"/>
</dbReference>
<dbReference type="GO" id="GO:0005634">
    <property type="term" value="C:nucleus"/>
    <property type="evidence" value="ECO:0007669"/>
    <property type="project" value="EnsemblMetazoa"/>
</dbReference>
<dbReference type="GO" id="GO:0043186">
    <property type="term" value="C:P granule"/>
    <property type="evidence" value="ECO:0007669"/>
    <property type="project" value="EnsemblMetazoa"/>
</dbReference>
<dbReference type="GO" id="GO:0005524">
    <property type="term" value="F:ATP binding"/>
    <property type="evidence" value="ECO:0007669"/>
    <property type="project" value="UniProtKB-KW"/>
</dbReference>
<dbReference type="GO" id="GO:0016887">
    <property type="term" value="F:ATP hydrolysis activity"/>
    <property type="evidence" value="ECO:0007669"/>
    <property type="project" value="RHEA"/>
</dbReference>
<dbReference type="GO" id="GO:0003723">
    <property type="term" value="F:RNA binding"/>
    <property type="evidence" value="ECO:0007669"/>
    <property type="project" value="TreeGrafter"/>
</dbReference>
<dbReference type="GO" id="GO:0003724">
    <property type="term" value="F:RNA helicase activity"/>
    <property type="evidence" value="ECO:0007669"/>
    <property type="project" value="UniProtKB-EC"/>
</dbReference>
<dbReference type="GO" id="GO:0046843">
    <property type="term" value="P:dorsal appendage formation"/>
    <property type="evidence" value="ECO:0007669"/>
    <property type="project" value="EnsemblMetazoa"/>
</dbReference>
<dbReference type="GO" id="GO:0007294">
    <property type="term" value="P:germarium-derived oocyte fate determination"/>
    <property type="evidence" value="ECO:0007669"/>
    <property type="project" value="EnsemblMetazoa"/>
</dbReference>
<dbReference type="GO" id="GO:0098795">
    <property type="term" value="P:global gene silencing by mRNA cleavage"/>
    <property type="evidence" value="ECO:0007669"/>
    <property type="project" value="EnsemblMetazoa"/>
</dbReference>
<dbReference type="GO" id="GO:0031507">
    <property type="term" value="P:heterochromatin formation"/>
    <property type="evidence" value="ECO:0007669"/>
    <property type="project" value="EnsemblMetazoa"/>
</dbReference>
<dbReference type="GO" id="GO:0008298">
    <property type="term" value="P:intracellular mRNA localization"/>
    <property type="evidence" value="ECO:0007669"/>
    <property type="project" value="EnsemblMetazoa"/>
</dbReference>
<dbReference type="GO" id="GO:0007076">
    <property type="term" value="P:mitotic chromosome condensation"/>
    <property type="evidence" value="ECO:0007669"/>
    <property type="project" value="EnsemblMetazoa"/>
</dbReference>
<dbReference type="GO" id="GO:0030717">
    <property type="term" value="P:oocyte karyosome formation"/>
    <property type="evidence" value="ECO:0007669"/>
    <property type="project" value="EnsemblMetazoa"/>
</dbReference>
<dbReference type="GO" id="GO:0030720">
    <property type="term" value="P:oocyte localization involved in germarium-derived egg chamber formation"/>
    <property type="evidence" value="ECO:0007669"/>
    <property type="project" value="EnsemblMetazoa"/>
</dbReference>
<dbReference type="GO" id="GO:0001556">
    <property type="term" value="P:oocyte maturation"/>
    <property type="evidence" value="ECO:0007669"/>
    <property type="project" value="EnsemblMetazoa"/>
</dbReference>
<dbReference type="GO" id="GO:0009949">
    <property type="term" value="P:polarity specification of anterior/posterior axis"/>
    <property type="evidence" value="ECO:0007669"/>
    <property type="project" value="EnsemblMetazoa"/>
</dbReference>
<dbReference type="GO" id="GO:0009951">
    <property type="term" value="P:polarity specification of dorsal/ventral axis"/>
    <property type="evidence" value="ECO:0007669"/>
    <property type="project" value="EnsemblMetazoa"/>
</dbReference>
<dbReference type="GO" id="GO:0007317">
    <property type="term" value="P:regulation of pole plasm oskar mRNA localization"/>
    <property type="evidence" value="ECO:0007669"/>
    <property type="project" value="EnsemblMetazoa"/>
</dbReference>
<dbReference type="GO" id="GO:0140965">
    <property type="term" value="P:secondary piRNA processing"/>
    <property type="evidence" value="ECO:0007669"/>
    <property type="project" value="EnsemblMetazoa"/>
</dbReference>
<dbReference type="GO" id="GO:0007283">
    <property type="term" value="P:spermatogenesis"/>
    <property type="evidence" value="ECO:0007669"/>
    <property type="project" value="UniProtKB-KW"/>
</dbReference>
<dbReference type="GO" id="GO:0141009">
    <property type="term" value="P:transposable element silencing by piRNA-mediated mRNA destabilization"/>
    <property type="evidence" value="ECO:0007669"/>
    <property type="project" value="EnsemblMetazoa"/>
</dbReference>
<dbReference type="CDD" id="cd18791">
    <property type="entry name" value="SF2_C_RHA"/>
    <property type="match status" value="1"/>
</dbReference>
<dbReference type="CDD" id="cd20444">
    <property type="entry name" value="Tudor_vreteno-like_rpt1"/>
    <property type="match status" value="1"/>
</dbReference>
<dbReference type="FunFam" id="3.40.50.300:FF:001676">
    <property type="entry name" value="DExH-box ATP-dependent RNA helicase DExH7 chloroplastic"/>
    <property type="match status" value="1"/>
</dbReference>
<dbReference type="Gene3D" id="1.20.120.1080">
    <property type="match status" value="1"/>
</dbReference>
<dbReference type="Gene3D" id="2.30.30.140">
    <property type="match status" value="1"/>
</dbReference>
<dbReference type="Gene3D" id="2.40.50.90">
    <property type="match status" value="1"/>
</dbReference>
<dbReference type="Gene3D" id="3.40.50.300">
    <property type="entry name" value="P-loop containing nucleotide triphosphate hydrolases"/>
    <property type="match status" value="2"/>
</dbReference>
<dbReference type="InterPro" id="IPR011545">
    <property type="entry name" value="DEAD/DEAH_box_helicase_dom"/>
</dbReference>
<dbReference type="InterPro" id="IPR007502">
    <property type="entry name" value="Helicase-assoc_dom"/>
</dbReference>
<dbReference type="InterPro" id="IPR014001">
    <property type="entry name" value="Helicase_ATP-bd"/>
</dbReference>
<dbReference type="InterPro" id="IPR001650">
    <property type="entry name" value="Helicase_C-like"/>
</dbReference>
<dbReference type="InterPro" id="IPR027417">
    <property type="entry name" value="P-loop_NTPase"/>
</dbReference>
<dbReference type="InterPro" id="IPR035437">
    <property type="entry name" value="SNase_OB-fold_sf"/>
</dbReference>
<dbReference type="InterPro" id="IPR002999">
    <property type="entry name" value="Tudor"/>
</dbReference>
<dbReference type="InterPro" id="IPR013087">
    <property type="entry name" value="Znf_C2H2_type"/>
</dbReference>
<dbReference type="PANTHER" id="PTHR18934">
    <property type="entry name" value="ATP-DEPENDENT RNA HELICASE"/>
    <property type="match status" value="1"/>
</dbReference>
<dbReference type="PANTHER" id="PTHR18934:SF113">
    <property type="entry name" value="ATP-DEPENDENT RNA HELICASE TDRD9"/>
    <property type="match status" value="1"/>
</dbReference>
<dbReference type="Pfam" id="PF00270">
    <property type="entry name" value="DEAD"/>
    <property type="match status" value="1"/>
</dbReference>
<dbReference type="Pfam" id="PF00271">
    <property type="entry name" value="Helicase_C"/>
    <property type="match status" value="1"/>
</dbReference>
<dbReference type="Pfam" id="PF00567">
    <property type="entry name" value="TUDOR"/>
    <property type="match status" value="1"/>
</dbReference>
<dbReference type="SMART" id="SM00487">
    <property type="entry name" value="DEXDc"/>
    <property type="match status" value="1"/>
</dbReference>
<dbReference type="SMART" id="SM00847">
    <property type="entry name" value="HA2"/>
    <property type="match status" value="1"/>
</dbReference>
<dbReference type="SMART" id="SM00490">
    <property type="entry name" value="HELICc"/>
    <property type="match status" value="1"/>
</dbReference>
<dbReference type="SMART" id="SM00333">
    <property type="entry name" value="TUDOR"/>
    <property type="match status" value="1"/>
</dbReference>
<dbReference type="SUPFAM" id="SSF52540">
    <property type="entry name" value="P-loop containing nucleoside triphosphate hydrolases"/>
    <property type="match status" value="1"/>
</dbReference>
<dbReference type="SUPFAM" id="SSF63748">
    <property type="entry name" value="Tudor/PWWP/MBT"/>
    <property type="match status" value="1"/>
</dbReference>
<dbReference type="PROSITE" id="PS51192">
    <property type="entry name" value="HELICASE_ATP_BIND_1"/>
    <property type="match status" value="1"/>
</dbReference>
<dbReference type="PROSITE" id="PS51194">
    <property type="entry name" value="HELICASE_CTER"/>
    <property type="match status" value="1"/>
</dbReference>
<dbReference type="PROSITE" id="PS50304">
    <property type="entry name" value="TUDOR"/>
    <property type="match status" value="1"/>
</dbReference>
<name>SPNE_DROAN</name>
<keyword id="KW-0067">ATP-binding</keyword>
<keyword id="KW-0963">Cytoplasm</keyword>
<keyword id="KW-0217">Developmental protein</keyword>
<keyword id="KW-0221">Differentiation</keyword>
<keyword id="KW-0347">Helicase</keyword>
<keyword id="KW-0378">Hydrolase</keyword>
<keyword id="KW-0469">Meiosis</keyword>
<keyword id="KW-0547">Nucleotide-binding</keyword>
<keyword id="KW-0896">Oogenesis</keyword>
<keyword id="KW-1185">Reference proteome</keyword>
<keyword id="KW-0943">RNA-mediated gene silencing</keyword>
<keyword id="KW-0744">Spermatogenesis</keyword>
<accession>B3M383</accession>
<feature type="chain" id="PRO_0000391913" description="Probable ATP-dependent RNA helicase spindle-E">
    <location>
        <begin position="1"/>
        <end position="1429"/>
    </location>
</feature>
<feature type="domain" description="Helicase ATP-binding" evidence="3">
    <location>
        <begin position="121"/>
        <end position="288"/>
    </location>
</feature>
<feature type="domain" description="Helicase C-terminal" evidence="4">
    <location>
        <begin position="349"/>
        <end position="521"/>
    </location>
</feature>
<feature type="domain" description="Tudor" evidence="2">
    <location>
        <begin position="933"/>
        <end position="996"/>
    </location>
</feature>
<feature type="short sequence motif" description="DEAH box">
    <location>
        <begin position="234"/>
        <end position="237"/>
    </location>
</feature>
<feature type="binding site" evidence="3">
    <location>
        <begin position="134"/>
        <end position="141"/>
    </location>
    <ligand>
        <name>ATP</name>
        <dbReference type="ChEBI" id="CHEBI:30616"/>
    </ligand>
</feature>
<reference key="1">
    <citation type="journal article" date="2007" name="Nature">
        <title>Evolution of genes and genomes on the Drosophila phylogeny.</title>
        <authorList>
            <consortium name="Drosophila 12 genomes consortium"/>
        </authorList>
    </citation>
    <scope>NUCLEOTIDE SEQUENCE [LARGE SCALE GENOMIC DNA]</scope>
    <source>
        <strain>Tucson 14024-0371.13</strain>
    </source>
</reference>
<comment type="function">
    <text evidence="1">Probable ATP-binding RNA helicase which plays a central role during spermatogenesis and oogenesis by repressing transposable elements and preventing their mobilization, which is essential for the germline integrity. Acts via the piRNA metabolic process, which mediates the repression of transposable elements during meiosis by forming complexes composed of piRNAs and Piwi and govern the methylation and subsequent repression of transposons. Involved in the repression of LTR retrotransposon copia. Also involved in telomere regulation by repressing specialized telomeric retroelements HeT-A, TAHRE, and TART; Drosophila telomeres being maintained by transposition of specialized telomeric retroelements. Involved in telomeric trans-silencing, a repression mechanism by which a transposon or a transgene inserted in subtelomeric heterochromatin has the capacity to repress in trans in the female germline, a homologous transposon, or transgene located in euchromatin. Involved in the repression of testis-expressed Stellate genes by the homologous Su(Ste) repeats. Required for anteroposterior and dorsoventral axis formation during oogenesis (By similarity).</text>
</comment>
<comment type="catalytic activity">
    <reaction>
        <text>ATP + H2O = ADP + phosphate + H(+)</text>
        <dbReference type="Rhea" id="RHEA:13065"/>
        <dbReference type="ChEBI" id="CHEBI:15377"/>
        <dbReference type="ChEBI" id="CHEBI:15378"/>
        <dbReference type="ChEBI" id="CHEBI:30616"/>
        <dbReference type="ChEBI" id="CHEBI:43474"/>
        <dbReference type="ChEBI" id="CHEBI:456216"/>
        <dbReference type="EC" id="3.6.4.13"/>
    </reaction>
</comment>
<comment type="subcellular location">
    <subcellularLocation>
        <location evidence="1">Cytoplasm</location>
    </subcellularLocation>
    <text evidence="1">Component of the nuage, also named P granule, a germ-cell-specific organelle required to repress transposon during meiosis.</text>
</comment>
<comment type="similarity">
    <text evidence="5">Belongs to the DEAD box helicase family. DEAH subfamily.</text>
</comment>
<evidence type="ECO:0000250" key="1"/>
<evidence type="ECO:0000255" key="2">
    <source>
        <dbReference type="PROSITE-ProRule" id="PRU00211"/>
    </source>
</evidence>
<evidence type="ECO:0000255" key="3">
    <source>
        <dbReference type="PROSITE-ProRule" id="PRU00541"/>
    </source>
</evidence>
<evidence type="ECO:0000255" key="4">
    <source>
        <dbReference type="PROSITE-ProRule" id="PRU00542"/>
    </source>
</evidence>
<evidence type="ECO:0000305" key="5"/>
<sequence>MDFFDFTKDFRREEAPSGFISSDPSSMATEMFESKPIKREVIGTDYVAEIAAKEKLLMSGQLKAEIPGQYSGGMDDLDSNDDMDDEEISKIRLDEEYYKKYRFNLNRDKNLPIYAKREVIVNAINTHQVVILKGETGCGKTTQVPQYILDEGFKSGQYCNIVVTQPRRIGAISIANRVSQERMWEPDTVCSYQVGLHRKQHLEDTRLLYCTTGVLLNSLIRNKTLTHYTHIVLDEVHERDQDMDFLLIVVRRLLATNSRHVKVILMSATIDTREFCDYFSTKVSVPPVISASHGRKHSIEKFYRDQLGSINWKDDPDDGYQARIPDEAYKAAVKIILVVDNMERQAANQSEQSYDDAKSQGAVLIFLPGIYEIDNMAESLGNMTKEEPSMKLFIVRCFSLMTPDAQRDVFSPPPSGFRKIILATNIAESSITVPDVSYVIDFCLTKVLVTDTATNFSSLRLTWASKANCRQRAGRVGRLRSGRVYRMVHKLFYKTNMTEFGVPEMLRLPLQNSVLKAKLLDIAPPIEMLALALSPPNLSDIQNTILLLKEVGALFPTVDGEYCEVDGDITFWGIIMSRLPLDTRLSRLIILGYVFNLLEEAIVIAAGLSMRGLSTEAGRGRLTSDAYWMNYVFADGSGSDLVAIWRIYRTYENMVANGMHQESAEPWARRYHVSLRALKEMHLLVQELKSRCSQLGMISFNLSSSDMPDDLEKAILLKVIIAGAFYPNYFLRSKKTTLEQERDIFHVISGRDPCRTVYFTNFKPAYMGELYTRRIKDLFQELKIPPESIEVTFQPGSQKVFVTFKSDECDTNCTRLINVPGQVLTEVYKSIRMRLYQSNRTFRVMDHNNALNYVQRHGIGTLKEGHWTPPSRPLNVEMLALPSVYEKNMTGLITHVDHCGKFFFQPKSFARCIQNMSEIINTPMHLQYEIQNAGVLTKGMMVLAKRKGTFERAIIVRPETQNNRQPKFFVRFVDYGNTDLMYIEQLRLMTKELLSQYGDLPPRVFECRLALVQPSTMSNTLSRWSRDAKDMLISASKNNIVEIEIYSLVYNVAAVMVHTRDGLLNDKLVEHNLARRADENFMSRQDHDFRIRKQESARYISGPERQQVNEEYLRSCQMPEDLDLTPPPLDKCNMIVMLKGPYSPLETSMFSTIRVGVWKTVKIDNSSVNAVLLDSDPQDNHDQLVVSHSTVESSNGDVLTARGTTLMPNIHGFGPLMTMLFCPTMQIKCNKDCTKYVSILAGLGFDKETMKPYFEEHDMVMNLDVNLYEDDVRMINQMRYNIDTMFFNFEGEELPSLNMNDRVTIYKELRKLVNRLLSKDRSYIELNASNSDFNWEKEDRIEPQPEPFGKRCIFPMHVIPELLEEDIGRRLYLIDNCKKLYKWRNFEGALDILNCKLCNMSLETTPQLRLHLLTQLHRDREKQIGFKNE</sequence>